<protein>
    <recommendedName>
        <fullName evidence="1">Acetyl-coenzyme A carboxylase carboxyl transferase subunit beta</fullName>
        <shortName evidence="1">ACCase subunit beta</shortName>
        <shortName evidence="1">Acetyl-CoA carboxylase carboxyltransferase subunit beta</shortName>
        <ecNumber evidence="1">2.1.3.15</ecNumber>
    </recommendedName>
</protein>
<gene>
    <name evidence="1" type="primary">accD</name>
    <name type="ordered locus">Aasi_1431</name>
</gene>
<reference key="1">
    <citation type="journal article" date="2010" name="J. Bacteriol.">
        <title>The genome of the amoeba symbiont 'Candidatus Amoebophilus asiaticus' reveals common mechanisms for host cell interaction among amoeba-associated bacteria.</title>
        <authorList>
            <person name="Schmitz-Esser S."/>
            <person name="Tischler P."/>
            <person name="Arnold R."/>
            <person name="Montanaro J."/>
            <person name="Wagner M."/>
            <person name="Rattei T."/>
            <person name="Horn M."/>
        </authorList>
    </citation>
    <scope>NUCLEOTIDE SEQUENCE [LARGE SCALE GENOMIC DNA]</scope>
    <source>
        <strain>5a2</strain>
    </source>
</reference>
<accession>B3EU20</accession>
<comment type="function">
    <text evidence="1">Component of the acetyl coenzyme A carboxylase (ACC) complex. Biotin carboxylase (BC) catalyzes the carboxylation of biotin on its carrier protein (BCCP) and then the CO(2) group is transferred by the transcarboxylase to acetyl-CoA to form malonyl-CoA.</text>
</comment>
<comment type="catalytic activity">
    <reaction evidence="1">
        <text>N(6)-carboxybiotinyl-L-lysyl-[protein] + acetyl-CoA = N(6)-biotinyl-L-lysyl-[protein] + malonyl-CoA</text>
        <dbReference type="Rhea" id="RHEA:54728"/>
        <dbReference type="Rhea" id="RHEA-COMP:10505"/>
        <dbReference type="Rhea" id="RHEA-COMP:10506"/>
        <dbReference type="ChEBI" id="CHEBI:57288"/>
        <dbReference type="ChEBI" id="CHEBI:57384"/>
        <dbReference type="ChEBI" id="CHEBI:83144"/>
        <dbReference type="ChEBI" id="CHEBI:83145"/>
        <dbReference type="EC" id="2.1.3.15"/>
    </reaction>
</comment>
<comment type="pathway">
    <text evidence="1">Lipid metabolism; malonyl-CoA biosynthesis; malonyl-CoA from acetyl-CoA: step 1/1.</text>
</comment>
<comment type="subunit">
    <text evidence="1">Acetyl-CoA carboxylase is a heterohexamer composed of biotin carboxyl carrier protein (AccB), biotin carboxylase (AccC) and two subunits each of ACCase subunit alpha (AccA) and ACCase subunit beta (AccD).</text>
</comment>
<comment type="subcellular location">
    <subcellularLocation>
        <location evidence="1">Cytoplasm</location>
    </subcellularLocation>
</comment>
<comment type="similarity">
    <text evidence="1">Belongs to the AccD/PCCB family.</text>
</comment>
<evidence type="ECO:0000255" key="1">
    <source>
        <dbReference type="HAMAP-Rule" id="MF_01395"/>
    </source>
</evidence>
<evidence type="ECO:0000255" key="2">
    <source>
        <dbReference type="PROSITE-ProRule" id="PRU01136"/>
    </source>
</evidence>
<feature type="chain" id="PRO_0000389665" description="Acetyl-coenzyme A carboxylase carboxyl transferase subunit beta">
    <location>
        <begin position="1"/>
        <end position="281"/>
    </location>
</feature>
<feature type="domain" description="CoA carboxyltransferase N-terminal" evidence="2">
    <location>
        <begin position="24"/>
        <end position="281"/>
    </location>
</feature>
<keyword id="KW-0067">ATP-binding</keyword>
<keyword id="KW-0963">Cytoplasm</keyword>
<keyword id="KW-0275">Fatty acid biosynthesis</keyword>
<keyword id="KW-0276">Fatty acid metabolism</keyword>
<keyword id="KW-0444">Lipid biosynthesis</keyword>
<keyword id="KW-0443">Lipid metabolism</keyword>
<keyword id="KW-0547">Nucleotide-binding</keyword>
<keyword id="KW-1185">Reference proteome</keyword>
<keyword id="KW-0808">Transferase</keyword>
<proteinExistence type="inferred from homology"/>
<organism>
    <name type="scientific">Amoebophilus asiaticus (strain 5a2)</name>
    <dbReference type="NCBI Taxonomy" id="452471"/>
    <lineage>
        <taxon>Bacteria</taxon>
        <taxon>Pseudomonadati</taxon>
        <taxon>Bacteroidota</taxon>
        <taxon>Cytophagia</taxon>
        <taxon>Cytophagales</taxon>
        <taxon>Amoebophilaceae</taxon>
        <taxon>Candidatus Amoebophilus</taxon>
    </lineage>
</organism>
<name>ACCD_AMOA5</name>
<sequence>MAWFRRKQKGILTPTEHKKEIPDGLWYKSPKGKIIQIKELKENVYVSPEDGYHVRIGSKEYFELLFDNNQFTEIAANLTSADPLEFIDNKPYTQRLQQAQQDTQLKDSIQVGYGPVNGNSMVIACMDFNFIGGSMGSVVGEKIAKAVDHALEHKAPLLIISKSGGARMMEAGLSLMQMAKTSAKLLQLAKARIPYISLLTDPTTGGVTASFAMLGDFNIAEPGALIGFAGPRIIRDTIGRDLPKGFQTSEFLLEHGFLDFIVDRRMLKATLTKLLTMLANN</sequence>
<dbReference type="EC" id="2.1.3.15" evidence="1"/>
<dbReference type="EMBL" id="CP001102">
    <property type="protein sequence ID" value="ACE06722.1"/>
    <property type="molecule type" value="Genomic_DNA"/>
</dbReference>
<dbReference type="RefSeq" id="WP_012473462.1">
    <property type="nucleotide sequence ID" value="NC_010830.1"/>
</dbReference>
<dbReference type="SMR" id="B3EU20"/>
<dbReference type="STRING" id="452471.Aasi_1431"/>
<dbReference type="KEGG" id="aas:Aasi_1431"/>
<dbReference type="eggNOG" id="COG0777">
    <property type="taxonomic scope" value="Bacteria"/>
</dbReference>
<dbReference type="HOGENOM" id="CLU_015486_1_1_10"/>
<dbReference type="OrthoDB" id="9772975at2"/>
<dbReference type="UniPathway" id="UPA00655">
    <property type="reaction ID" value="UER00711"/>
</dbReference>
<dbReference type="Proteomes" id="UP000001227">
    <property type="component" value="Chromosome"/>
</dbReference>
<dbReference type="GO" id="GO:0009317">
    <property type="term" value="C:acetyl-CoA carboxylase complex"/>
    <property type="evidence" value="ECO:0007669"/>
    <property type="project" value="InterPro"/>
</dbReference>
<dbReference type="GO" id="GO:0003989">
    <property type="term" value="F:acetyl-CoA carboxylase activity"/>
    <property type="evidence" value="ECO:0007669"/>
    <property type="project" value="InterPro"/>
</dbReference>
<dbReference type="GO" id="GO:0005524">
    <property type="term" value="F:ATP binding"/>
    <property type="evidence" value="ECO:0007669"/>
    <property type="project" value="UniProtKB-KW"/>
</dbReference>
<dbReference type="GO" id="GO:0016743">
    <property type="term" value="F:carboxyl- or carbamoyltransferase activity"/>
    <property type="evidence" value="ECO:0007669"/>
    <property type="project" value="UniProtKB-UniRule"/>
</dbReference>
<dbReference type="GO" id="GO:0006633">
    <property type="term" value="P:fatty acid biosynthetic process"/>
    <property type="evidence" value="ECO:0007669"/>
    <property type="project" value="UniProtKB-KW"/>
</dbReference>
<dbReference type="GO" id="GO:2001295">
    <property type="term" value="P:malonyl-CoA biosynthetic process"/>
    <property type="evidence" value="ECO:0007669"/>
    <property type="project" value="UniProtKB-UniRule"/>
</dbReference>
<dbReference type="Gene3D" id="3.90.226.10">
    <property type="entry name" value="2-enoyl-CoA Hydratase, Chain A, domain 1"/>
    <property type="match status" value="1"/>
</dbReference>
<dbReference type="HAMAP" id="MF_01395">
    <property type="entry name" value="AcetylCoA_CT_beta"/>
    <property type="match status" value="1"/>
</dbReference>
<dbReference type="InterPro" id="IPR034733">
    <property type="entry name" value="AcCoA_carboxyl_beta"/>
</dbReference>
<dbReference type="InterPro" id="IPR000438">
    <property type="entry name" value="Acetyl_CoA_COase_Trfase_b_su"/>
</dbReference>
<dbReference type="InterPro" id="IPR029045">
    <property type="entry name" value="ClpP/crotonase-like_dom_sf"/>
</dbReference>
<dbReference type="InterPro" id="IPR011762">
    <property type="entry name" value="COA_CT_N"/>
</dbReference>
<dbReference type="NCBIfam" id="TIGR00515">
    <property type="entry name" value="accD"/>
    <property type="match status" value="1"/>
</dbReference>
<dbReference type="PANTHER" id="PTHR42995">
    <property type="entry name" value="ACETYL-COENZYME A CARBOXYLASE CARBOXYL TRANSFERASE SUBUNIT BETA, CHLOROPLASTIC"/>
    <property type="match status" value="1"/>
</dbReference>
<dbReference type="PANTHER" id="PTHR42995:SF5">
    <property type="entry name" value="ACETYL-COENZYME A CARBOXYLASE CARBOXYL TRANSFERASE SUBUNIT BETA, CHLOROPLASTIC"/>
    <property type="match status" value="1"/>
</dbReference>
<dbReference type="Pfam" id="PF01039">
    <property type="entry name" value="Carboxyl_trans"/>
    <property type="match status" value="1"/>
</dbReference>
<dbReference type="PRINTS" id="PR01070">
    <property type="entry name" value="ACCCTRFRASEB"/>
</dbReference>
<dbReference type="SUPFAM" id="SSF52096">
    <property type="entry name" value="ClpP/crotonase"/>
    <property type="match status" value="1"/>
</dbReference>
<dbReference type="PROSITE" id="PS50980">
    <property type="entry name" value="COA_CT_NTER"/>
    <property type="match status" value="1"/>
</dbReference>